<organism>
    <name type="scientific">Aspergillus terreus (strain NIH 2624 / FGSC A1156)</name>
    <dbReference type="NCBI Taxonomy" id="341663"/>
    <lineage>
        <taxon>Eukaryota</taxon>
        <taxon>Fungi</taxon>
        <taxon>Dikarya</taxon>
        <taxon>Ascomycota</taxon>
        <taxon>Pezizomycotina</taxon>
        <taxon>Eurotiomycetes</taxon>
        <taxon>Eurotiomycetidae</taxon>
        <taxon>Eurotiales</taxon>
        <taxon>Aspergillaceae</taxon>
        <taxon>Aspergillus</taxon>
        <taxon>Aspergillus subgen. Circumdati</taxon>
    </lineage>
</organism>
<reference key="1">
    <citation type="journal article" date="2018" name="Sci. Rep.">
        <title>Heterologous pathway assembly reveals molecular steps of fungal terreic acid biosynthesis.</title>
        <authorList>
            <person name="Kong C."/>
            <person name="Huang H."/>
            <person name="Xue Y."/>
            <person name="Liu Y."/>
            <person name="Peng Q."/>
            <person name="Liu Q."/>
            <person name="Xu Q."/>
            <person name="Zhu Q."/>
            <person name="Yin Y."/>
            <person name="Zhou X."/>
            <person name="Zhang Y."/>
            <person name="Cai M."/>
        </authorList>
    </citation>
    <scope>NUCLEOTIDE SEQUENCE [MRNA]</scope>
    <scope>FUNCTION</scope>
    <scope>PATHWAY</scope>
    <source>
        <strain evidence="10">NIH 2624 / FGSC A1156</strain>
    </source>
</reference>
<reference key="2">
    <citation type="submission" date="2005-09" db="EMBL/GenBank/DDBJ databases">
        <title>Annotation of the Aspergillus terreus NIH2624 genome.</title>
        <authorList>
            <person name="Birren B.W."/>
            <person name="Lander E.S."/>
            <person name="Galagan J.E."/>
            <person name="Nusbaum C."/>
            <person name="Devon K."/>
            <person name="Henn M."/>
            <person name="Ma L.-J."/>
            <person name="Jaffe D.B."/>
            <person name="Butler J."/>
            <person name="Alvarez P."/>
            <person name="Gnerre S."/>
            <person name="Grabherr M."/>
            <person name="Kleber M."/>
            <person name="Mauceli E.W."/>
            <person name="Brockman W."/>
            <person name="Rounsley S."/>
            <person name="Young S.K."/>
            <person name="LaButti K."/>
            <person name="Pushparaj V."/>
            <person name="DeCaprio D."/>
            <person name="Crawford M."/>
            <person name="Koehrsen M."/>
            <person name="Engels R."/>
            <person name="Montgomery P."/>
            <person name="Pearson M."/>
            <person name="Howarth C."/>
            <person name="Larson L."/>
            <person name="Luoma S."/>
            <person name="White J."/>
            <person name="Alvarado L."/>
            <person name="Kodira C.D."/>
            <person name="Zeng Q."/>
            <person name="Oleary S."/>
            <person name="Yandava C."/>
            <person name="Denning D.W."/>
            <person name="Nierman W.C."/>
            <person name="Milne T."/>
            <person name="Madden K."/>
        </authorList>
    </citation>
    <scope>NUCLEOTIDE SEQUENCE [LARGE SCALE GENOMIC DNA]</scope>
    <source>
        <strain>NIH 2624 / FGSC A1156</strain>
    </source>
</reference>
<reference key="3">
    <citation type="journal article" date="1996" name="Mol. Gen. Genet.">
        <title>Cloning of the polyketide synthase gene atX from Aspergillus terreus and its identification as the 6-methylsalicylic acid synthase gene by heterologous expression.</title>
        <authorList>
            <person name="Fujii I."/>
            <person name="Ono Y."/>
            <person name="Tada H."/>
            <person name="Gomi K."/>
            <person name="Ebizuka Y."/>
            <person name="Sankawa U."/>
        </authorList>
    </citation>
    <scope>FUNCTION</scope>
</reference>
<reference key="4">
    <citation type="journal article" date="1997" name="Folia Microbiol. (Praha)">
        <title>Polyketide synthase gene pksM from Aspergillus terreus expressed during growth phase.</title>
        <authorList>
            <person name="Pazoutova S."/>
            <person name="Linka M."/>
            <person name="Storkova S."/>
            <person name="Schwab H."/>
        </authorList>
    </citation>
    <scope>FUNCTION</scope>
</reference>
<reference key="5">
    <citation type="journal article" date="1999" name="Proc. Natl. Acad. Sci. U.S.A.">
        <title>Terreic acid, a quinone epoxide inhibitor of Bruton's tyrosine kinase.</title>
        <authorList>
            <person name="Kawakami Y."/>
            <person name="Hartman S.E."/>
            <person name="Kinoshita E."/>
            <person name="Suzuki H."/>
            <person name="Kitaura J."/>
            <person name="Yao L."/>
            <person name="Inagaki N."/>
            <person name="Franco A."/>
            <person name="Hata D."/>
            <person name="Maeda-Yamamoto M."/>
            <person name="Fukamachi H."/>
            <person name="Nagai H."/>
            <person name="Kawakami T."/>
        </authorList>
    </citation>
    <scope>BIOTECHNOLOGY</scope>
</reference>
<reference key="6">
    <citation type="journal article" date="2014" name="J. Basic Microbiol.">
        <title>Differential antibacterial properties of the MurA inhibitors terreic acid and fosfomycin.</title>
        <authorList>
            <person name="Olesen S.H."/>
            <person name="Ingles D.J."/>
            <person name="Yang Y."/>
            <person name="Schoenbrunn E."/>
        </authorList>
    </citation>
    <scope>BIOTECHNOLOGY</scope>
</reference>
<reference key="7">
    <citation type="journal article" date="2014" name="J. Biotechnol.">
        <title>Culture-based and sequence-based insights into biosynthesis of secondary metabolites by Aspergillus terreus ATCC 20542.</title>
        <authorList>
            <person name="Boruta T."/>
            <person name="Bizukojc M."/>
        </authorList>
    </citation>
    <scope>FUNCTION</scope>
</reference>
<reference key="8">
    <citation type="journal article" date="2014" name="Org. Lett.">
        <title>Molecular genetic characterization of terreic acid pathway in Aspergillus terreus.</title>
        <authorList>
            <person name="Guo C.J."/>
            <person name="Sun W.W."/>
            <person name="Bruno K.S."/>
            <person name="Wang C.C."/>
        </authorList>
    </citation>
    <scope>FUNCTION</scope>
    <scope>DISRUPTION PHENOTYPE</scope>
</reference>
<feature type="chain" id="PRO_0000437640" description="Epoxidase atD">
    <location>
        <begin position="1"/>
        <end position="320"/>
    </location>
</feature>
<feature type="glycosylation site" description="N-linked (GlcNAc...) asparagine" evidence="1">
    <location>
        <position position="245"/>
    </location>
</feature>
<feature type="glycosylation site" description="N-linked (GlcNAc...) asparagine" evidence="1">
    <location>
        <position position="299"/>
    </location>
</feature>
<proteinExistence type="evidence at protein level"/>
<protein>
    <recommendedName>
        <fullName evidence="12">Epoxidase atD</fullName>
    </recommendedName>
    <alternativeName>
        <fullName evidence="9">Terreic acid biosynthesis cluster protein D</fullName>
    </alternativeName>
</protein>
<keyword id="KW-0325">Glycoprotein</keyword>
<keyword id="KW-1185">Reference proteome</keyword>
<accession>Q0CJ58</accession>
<accession>A0A2L0V392</accession>
<comment type="function">
    <text evidence="4 5 6 7 8">Epoxidase; part of the gene cluster that mediates the biosynthesis of terreic acid, a quinone epoxide inhibitor of Bruton's tyrosine kinase (PubMed:24534845, PubMed:25265334, PubMed:29391515). The first step of the pathway is the synthesis of 6-methylsalicylic acid (6-MSA) by the 6-methylsalicylic acid synthase atX (PubMed:25265334, PubMed:29391515, PubMed:9003280, PubMed:9438344). In the biosynthesis of 6-MSA, atX utilizes one acetyl-CoA and three malonyl-CoAs as its substrates and catalyzes a series of programmed reactions including Claisen condensation, reduction, aldol cyclization, and the hydrolytic cleavage that yields 6-MSA (PubMed:25265334, PubMed:9003280, PubMed:9438344). The 6-methylsalicylate 1-monooxygenase atA then catalyzes the decarboxylative hydroxylation of 6-MSA to 3-methylcatechol (PubMed:25265334, PubMed:29391515). The next step is the conversion of 3-methylcatechol to 3-methyl-1,2,4-benzenetriol by cytochrome P450 monooxygenase atE, which is enhanced by cytochrome P450 monooxygenase atG (PubMed:25265334, PubMed:29391515). Then, the epoxidase atD catalyzes the epoxidation and hydroxyl oxidation of 3-methyl-1,2,4-benzenetriol to terremutin (PubMed:29391515). Lastly, GMC oxidoreductase atC oxidizes terremutin to terreic acid (PubMed:25265334, PubMed:29391515).</text>
</comment>
<comment type="pathway">
    <text evidence="5 6">Secondary metabolite biosynthesis.</text>
</comment>
<comment type="disruption phenotype">
    <text evidence="5">Abolishes the production of terreic acid.</text>
</comment>
<comment type="biotechnology">
    <text evidence="2 3">Terreic acid is a metabolite with antibiotic properties (PubMed:23686727). Terreic acid also acts as a selective inhibitor of human Bruton's tyrosine kinase in mast cells and other immune cells (PubMed:10051623).</text>
</comment>
<comment type="sequence caution" evidence="11">
    <conflict type="erroneous gene model prediction">
        <sequence resource="EMBL-CDS" id="EAU32820"/>
    </conflict>
</comment>
<dbReference type="EMBL" id="KY950682">
    <property type="protein sequence ID" value="AUZ97939.1"/>
    <property type="molecule type" value="mRNA"/>
</dbReference>
<dbReference type="EMBL" id="CH476602">
    <property type="protein sequence ID" value="EAU32820.1"/>
    <property type="status" value="ALT_SEQ"/>
    <property type="molecule type" value="Genomic_DNA"/>
</dbReference>
<dbReference type="RefSeq" id="XP_001215454.1">
    <property type="nucleotide sequence ID" value="XM_001215454.1"/>
</dbReference>
<dbReference type="STRING" id="341663.Q0CJ58"/>
<dbReference type="GlyCosmos" id="Q0CJ58">
    <property type="glycosylation" value="1 site, No reported glycans"/>
</dbReference>
<dbReference type="EnsemblFungi" id="EAU32820">
    <property type="protein sequence ID" value="EAU32820"/>
    <property type="gene ID" value="ATEG_06276"/>
</dbReference>
<dbReference type="GeneID" id="4322100"/>
<dbReference type="VEuPathDB" id="FungiDB:ATEG_06276"/>
<dbReference type="eggNOG" id="ENOG502S24I">
    <property type="taxonomic scope" value="Eukaryota"/>
</dbReference>
<dbReference type="HOGENOM" id="CLU_068080_0_0_1"/>
<dbReference type="OMA" id="GYKPFFR"/>
<dbReference type="OrthoDB" id="9976870at2759"/>
<dbReference type="Proteomes" id="UP000007963">
    <property type="component" value="Unassembled WGS sequence"/>
</dbReference>
<dbReference type="GO" id="GO:0016020">
    <property type="term" value="C:membrane"/>
    <property type="evidence" value="ECO:0007669"/>
    <property type="project" value="UniProtKB-SubCell"/>
</dbReference>
<dbReference type="Gene3D" id="2.60.120.10">
    <property type="entry name" value="Jelly Rolls"/>
    <property type="match status" value="1"/>
</dbReference>
<dbReference type="InterPro" id="IPR014710">
    <property type="entry name" value="RmlC-like_jellyroll"/>
</dbReference>
<dbReference type="InterPro" id="IPR011051">
    <property type="entry name" value="RmlC_Cupin_sf"/>
</dbReference>
<dbReference type="SUPFAM" id="SSF51182">
    <property type="entry name" value="RmlC-like cupins"/>
    <property type="match status" value="1"/>
</dbReference>
<evidence type="ECO:0000255" key="1">
    <source>
        <dbReference type="PROSITE-ProRule" id="PRU00498"/>
    </source>
</evidence>
<evidence type="ECO:0000269" key="2">
    <source>
    </source>
</evidence>
<evidence type="ECO:0000269" key="3">
    <source>
    </source>
</evidence>
<evidence type="ECO:0000269" key="4">
    <source>
    </source>
</evidence>
<evidence type="ECO:0000269" key="5">
    <source>
    </source>
</evidence>
<evidence type="ECO:0000269" key="6">
    <source>
    </source>
</evidence>
<evidence type="ECO:0000269" key="7">
    <source>
    </source>
</evidence>
<evidence type="ECO:0000269" key="8">
    <source>
    </source>
</evidence>
<evidence type="ECO:0000303" key="9">
    <source>
    </source>
</evidence>
<evidence type="ECO:0000303" key="10">
    <source>
    </source>
</evidence>
<evidence type="ECO:0000305" key="11"/>
<evidence type="ECO:0000305" key="12">
    <source>
    </source>
</evidence>
<gene>
    <name evidence="9" type="primary">atD</name>
    <name type="ORF">ATEG_06276</name>
</gene>
<sequence>MGELFKWPSFSPFVPFHVSAGQTVIRKFGGLLTCEFLPPPPGRSFMMRQTYRHSVEGPIPENLRKLIESDHRPDGPPMHFHQWQTEYFKVEEGICVVEVNGKQTMLTPDDEEISCKAGNIHRFFIHPDSRERMTVILSASDSGVDYQLDRVFFENWYGYWHDALLYQGGLDFIQTLCIHDAGDHYTPGPAWLPFRRFIGYWMCVVIGRWIGGLLGYKPFFREYTTDWDFAVTKMKANPWTRRLVNDSYANKKSWDEQVELSSRPKAQNADYELLVTDITEENRRKKANGATNGHAKLANGTATGVAVEVKENGEELRKRS</sequence>
<name>ATD_ASPTN</name>